<keyword id="KW-0903">Direct protein sequencing</keyword>
<keyword id="KW-1015">Disulfide bond</keyword>
<keyword id="KW-1185">Reference proteome</keyword>
<keyword id="KW-0708">Seed storage protein</keyword>
<keyword id="KW-0758">Storage protein</keyword>
<comment type="function">
    <text evidence="1">Seed storage protein.</text>
</comment>
<comment type="subunit">
    <text evidence="1">Hexamer; each subunit is composed of an acidic and a basic chain derived from a single precursor and linked by a disulfide bond.</text>
</comment>
<comment type="similarity">
    <text evidence="3">Belongs to the 11S seed storage protein (globulins) family.</text>
</comment>
<organism>
    <name type="scientific">Elaeis guineensis var. tenera</name>
    <name type="common">Oil palm</name>
    <dbReference type="NCBI Taxonomy" id="51953"/>
    <lineage>
        <taxon>Eukaryota</taxon>
        <taxon>Viridiplantae</taxon>
        <taxon>Streptophyta</taxon>
        <taxon>Embryophyta</taxon>
        <taxon>Tracheophyta</taxon>
        <taxon>Spermatophyta</taxon>
        <taxon>Magnoliopsida</taxon>
        <taxon>Liliopsida</taxon>
        <taxon>Arecaceae</taxon>
        <taxon>Arecoideae</taxon>
        <taxon>Cocoseae</taxon>
        <taxon>Elaeidinae</taxon>
        <taxon>Elaeis</taxon>
    </lineage>
</organism>
<name>11S1_ELAGV</name>
<protein>
    <recommendedName>
        <fullName evidence="2">Globulin 1</fullName>
    </recommendedName>
    <alternativeName>
        <fullName evidence="3">11S globulin seed storage protein 1</fullName>
    </alternativeName>
    <component>
        <recommendedName>
            <fullName evidence="3">Globulin 1 basic chain</fullName>
        </recommendedName>
    </component>
</protein>
<evidence type="ECO:0000250" key="1">
    <source>
        <dbReference type="UniProtKB" id="A0A222NNM9"/>
    </source>
</evidence>
<evidence type="ECO:0000303" key="2">
    <source ref="1"/>
</evidence>
<evidence type="ECO:0000305" key="3"/>
<accession>C0HLM8</accession>
<sequence length="12" mass="1402">GLEETYCSMKIK</sequence>
<feature type="chain" id="PRO_0000448941" description="Globulin 1 basic chain" evidence="3">
    <location>
        <begin position="1"/>
        <end position="12" status="greater than"/>
    </location>
</feature>
<feature type="disulfide bond" description="Interchain (between acidic and basic chains)" evidence="1">
    <location>
        <begin position="7"/>
        <end status="unknown"/>
    </location>
</feature>
<feature type="non-terminal residue" evidence="3">
    <location>
        <position position="12"/>
    </location>
</feature>
<reference evidence="3" key="1">
    <citation type="submission" date="2019-10" db="UniProtKB">
        <title>Oil palm (Elaeis guineensis var. tenera) kernel globulin: Proteomic characterization.</title>
        <authorList>
            <person name="Tapal A."/>
            <person name="Martin A."/>
            <person name="Kaul Tiku P."/>
        </authorList>
    </citation>
    <scope>PROTEIN SEQUENCE</scope>
</reference>
<dbReference type="InParanoid" id="C0HLM8"/>
<dbReference type="Proteomes" id="UP000504607">
    <property type="component" value="Unplaced"/>
</dbReference>
<dbReference type="GO" id="GO:0045735">
    <property type="term" value="F:nutrient reservoir activity"/>
    <property type="evidence" value="ECO:0007669"/>
    <property type="project" value="UniProtKB-KW"/>
</dbReference>
<proteinExistence type="evidence at protein level"/>